<name>RLMN_ECOSM</name>
<gene>
    <name evidence="1" type="primary">rlmN</name>
    <name type="ordered locus">EcSMS35_2669</name>
</gene>
<evidence type="ECO:0000255" key="1">
    <source>
        <dbReference type="HAMAP-Rule" id="MF_01849"/>
    </source>
</evidence>
<evidence type="ECO:0000255" key="2">
    <source>
        <dbReference type="PROSITE-ProRule" id="PRU01266"/>
    </source>
</evidence>
<sequence length="384" mass="43086">MSEQLVTPENVTTKDGKINLLDLNRQQMREFFKDLGEKPFRADQVMKWMYHYCCDNFDEMTDINKVLRGKLKEVAEIRAPEVVEEQRSSDGTIKWAIAVGDQRVETVYIPEDDRATLCVSSQVGCALECKFCSTAQQGFNRNLRVSEIIGQVWRAAKIVGAAKVTGQRPITNVVMMGMGEPLLNLNNVVPAMEIMLDDFGFGLSKRRVTLSTSGVVPALDKLGDMIDVALAISLHAPNDEIRDEIVPINKKYNIETFLAAVRRYLEKSNANQGRVTIEYVMLDHVNDGTEHAHQLAELLKDTPCKINLIPWNPFPGAPYGRSSNSRIDRFSKVLMSYGFTTIVRKTRGDDIDAACGQLAGDVIDRTKRTLRKRMQGEAIDIKAV</sequence>
<keyword id="KW-0004">4Fe-4S</keyword>
<keyword id="KW-0963">Cytoplasm</keyword>
<keyword id="KW-1015">Disulfide bond</keyword>
<keyword id="KW-0408">Iron</keyword>
<keyword id="KW-0411">Iron-sulfur</keyword>
<keyword id="KW-0479">Metal-binding</keyword>
<keyword id="KW-0489">Methyltransferase</keyword>
<keyword id="KW-0698">rRNA processing</keyword>
<keyword id="KW-0949">S-adenosyl-L-methionine</keyword>
<keyword id="KW-0808">Transferase</keyword>
<keyword id="KW-0819">tRNA processing</keyword>
<protein>
    <recommendedName>
        <fullName evidence="1">Dual-specificity RNA methyltransferase RlmN</fullName>
        <ecNumber evidence="1">2.1.1.192</ecNumber>
    </recommendedName>
    <alternativeName>
        <fullName evidence="1">23S rRNA (adenine(2503)-C(2))-methyltransferase</fullName>
    </alternativeName>
    <alternativeName>
        <fullName evidence="1">23S rRNA m2A2503 methyltransferase</fullName>
    </alternativeName>
    <alternativeName>
        <fullName evidence="1">Ribosomal RNA large subunit methyltransferase N</fullName>
    </alternativeName>
    <alternativeName>
        <fullName evidence="1">tRNA (adenine(37)-C(2))-methyltransferase</fullName>
    </alternativeName>
    <alternativeName>
        <fullName evidence="1">tRNA m2A37 methyltransferase</fullName>
    </alternativeName>
</protein>
<accession>B1LNH2</accession>
<organism>
    <name type="scientific">Escherichia coli (strain SMS-3-5 / SECEC)</name>
    <dbReference type="NCBI Taxonomy" id="439855"/>
    <lineage>
        <taxon>Bacteria</taxon>
        <taxon>Pseudomonadati</taxon>
        <taxon>Pseudomonadota</taxon>
        <taxon>Gammaproteobacteria</taxon>
        <taxon>Enterobacterales</taxon>
        <taxon>Enterobacteriaceae</taxon>
        <taxon>Escherichia</taxon>
    </lineage>
</organism>
<feature type="chain" id="PRO_0000350166" description="Dual-specificity RNA methyltransferase RlmN">
    <location>
        <begin position="1"/>
        <end position="384"/>
    </location>
</feature>
<feature type="domain" description="Radical SAM core" evidence="2">
    <location>
        <begin position="111"/>
        <end position="350"/>
    </location>
</feature>
<feature type="active site" description="Proton acceptor" evidence="1">
    <location>
        <position position="105"/>
    </location>
</feature>
<feature type="active site" description="S-methylcysteine intermediate" evidence="1">
    <location>
        <position position="355"/>
    </location>
</feature>
<feature type="binding site" evidence="1">
    <location>
        <position position="125"/>
    </location>
    <ligand>
        <name>[4Fe-4S] cluster</name>
        <dbReference type="ChEBI" id="CHEBI:49883"/>
        <note>4Fe-4S-S-AdoMet</note>
    </ligand>
</feature>
<feature type="binding site" evidence="1">
    <location>
        <position position="129"/>
    </location>
    <ligand>
        <name>[4Fe-4S] cluster</name>
        <dbReference type="ChEBI" id="CHEBI:49883"/>
        <note>4Fe-4S-S-AdoMet</note>
    </ligand>
</feature>
<feature type="binding site" evidence="1">
    <location>
        <position position="132"/>
    </location>
    <ligand>
        <name>[4Fe-4S] cluster</name>
        <dbReference type="ChEBI" id="CHEBI:49883"/>
        <note>4Fe-4S-S-AdoMet</note>
    </ligand>
</feature>
<feature type="binding site" evidence="1">
    <location>
        <begin position="179"/>
        <end position="180"/>
    </location>
    <ligand>
        <name>S-adenosyl-L-methionine</name>
        <dbReference type="ChEBI" id="CHEBI:59789"/>
    </ligand>
</feature>
<feature type="binding site" evidence="1">
    <location>
        <position position="211"/>
    </location>
    <ligand>
        <name>S-adenosyl-L-methionine</name>
        <dbReference type="ChEBI" id="CHEBI:59789"/>
    </ligand>
</feature>
<feature type="binding site" evidence="1">
    <location>
        <begin position="233"/>
        <end position="235"/>
    </location>
    <ligand>
        <name>S-adenosyl-L-methionine</name>
        <dbReference type="ChEBI" id="CHEBI:59789"/>
    </ligand>
</feature>
<feature type="binding site" evidence="1">
    <location>
        <position position="312"/>
    </location>
    <ligand>
        <name>S-adenosyl-L-methionine</name>
        <dbReference type="ChEBI" id="CHEBI:59789"/>
    </ligand>
</feature>
<feature type="disulfide bond" description="(transient)" evidence="1">
    <location>
        <begin position="118"/>
        <end position="355"/>
    </location>
</feature>
<reference key="1">
    <citation type="journal article" date="2008" name="J. Bacteriol.">
        <title>Insights into the environmental resistance gene pool from the genome sequence of the multidrug-resistant environmental isolate Escherichia coli SMS-3-5.</title>
        <authorList>
            <person name="Fricke W.F."/>
            <person name="Wright M.S."/>
            <person name="Lindell A.H."/>
            <person name="Harkins D.M."/>
            <person name="Baker-Austin C."/>
            <person name="Ravel J."/>
            <person name="Stepanauskas R."/>
        </authorList>
    </citation>
    <scope>NUCLEOTIDE SEQUENCE [LARGE SCALE GENOMIC DNA]</scope>
    <source>
        <strain>SMS-3-5 / SECEC</strain>
    </source>
</reference>
<dbReference type="EC" id="2.1.1.192" evidence="1"/>
<dbReference type="EMBL" id="CP000970">
    <property type="protein sequence ID" value="ACB19702.1"/>
    <property type="molecule type" value="Genomic_DNA"/>
</dbReference>
<dbReference type="RefSeq" id="WP_000003317.1">
    <property type="nucleotide sequence ID" value="NC_010498.1"/>
</dbReference>
<dbReference type="SMR" id="B1LNH2"/>
<dbReference type="KEGG" id="ecm:EcSMS35_2669"/>
<dbReference type="HOGENOM" id="CLU_029101_0_0_6"/>
<dbReference type="Proteomes" id="UP000007011">
    <property type="component" value="Chromosome"/>
</dbReference>
<dbReference type="GO" id="GO:0005737">
    <property type="term" value="C:cytoplasm"/>
    <property type="evidence" value="ECO:0007669"/>
    <property type="project" value="UniProtKB-SubCell"/>
</dbReference>
<dbReference type="GO" id="GO:0051539">
    <property type="term" value="F:4 iron, 4 sulfur cluster binding"/>
    <property type="evidence" value="ECO:0007669"/>
    <property type="project" value="UniProtKB-UniRule"/>
</dbReference>
<dbReference type="GO" id="GO:0046872">
    <property type="term" value="F:metal ion binding"/>
    <property type="evidence" value="ECO:0007669"/>
    <property type="project" value="UniProtKB-KW"/>
</dbReference>
<dbReference type="GO" id="GO:0070040">
    <property type="term" value="F:rRNA (adenine(2503)-C2-)-methyltransferase activity"/>
    <property type="evidence" value="ECO:0007669"/>
    <property type="project" value="UniProtKB-UniRule"/>
</dbReference>
<dbReference type="GO" id="GO:0019843">
    <property type="term" value="F:rRNA binding"/>
    <property type="evidence" value="ECO:0007669"/>
    <property type="project" value="UniProtKB-UniRule"/>
</dbReference>
<dbReference type="GO" id="GO:0002935">
    <property type="term" value="F:tRNA (adenine(37)-C2)-methyltransferase activity"/>
    <property type="evidence" value="ECO:0007669"/>
    <property type="project" value="UniProtKB-UniRule"/>
</dbReference>
<dbReference type="GO" id="GO:0000049">
    <property type="term" value="F:tRNA binding"/>
    <property type="evidence" value="ECO:0007669"/>
    <property type="project" value="UniProtKB-UniRule"/>
</dbReference>
<dbReference type="GO" id="GO:0070475">
    <property type="term" value="P:rRNA base methylation"/>
    <property type="evidence" value="ECO:0007669"/>
    <property type="project" value="UniProtKB-UniRule"/>
</dbReference>
<dbReference type="GO" id="GO:0030488">
    <property type="term" value="P:tRNA methylation"/>
    <property type="evidence" value="ECO:0007669"/>
    <property type="project" value="UniProtKB-UniRule"/>
</dbReference>
<dbReference type="CDD" id="cd01335">
    <property type="entry name" value="Radical_SAM"/>
    <property type="match status" value="1"/>
</dbReference>
<dbReference type="FunFam" id="1.10.150.530:FF:000001">
    <property type="entry name" value="Dual-specificity RNA methyltransferase RlmN"/>
    <property type="match status" value="1"/>
</dbReference>
<dbReference type="FunFam" id="3.20.20.70:FF:000008">
    <property type="entry name" value="Dual-specificity RNA methyltransferase RlmN"/>
    <property type="match status" value="1"/>
</dbReference>
<dbReference type="Gene3D" id="1.10.150.530">
    <property type="match status" value="1"/>
</dbReference>
<dbReference type="Gene3D" id="3.20.20.70">
    <property type="entry name" value="Aldolase class I"/>
    <property type="match status" value="1"/>
</dbReference>
<dbReference type="HAMAP" id="MF_01849">
    <property type="entry name" value="RNA_methyltr_RlmN"/>
    <property type="match status" value="1"/>
</dbReference>
<dbReference type="InterPro" id="IPR013785">
    <property type="entry name" value="Aldolase_TIM"/>
</dbReference>
<dbReference type="InterPro" id="IPR040072">
    <property type="entry name" value="Methyltransferase_A"/>
</dbReference>
<dbReference type="InterPro" id="IPR048641">
    <property type="entry name" value="RlmN_N"/>
</dbReference>
<dbReference type="InterPro" id="IPR027492">
    <property type="entry name" value="RNA_MTrfase_RlmN"/>
</dbReference>
<dbReference type="InterPro" id="IPR004383">
    <property type="entry name" value="rRNA_lsu_MTrfase_RlmN/Cfr"/>
</dbReference>
<dbReference type="InterPro" id="IPR007197">
    <property type="entry name" value="rSAM"/>
</dbReference>
<dbReference type="NCBIfam" id="NF008396">
    <property type="entry name" value="PRK11194.1"/>
    <property type="match status" value="1"/>
</dbReference>
<dbReference type="NCBIfam" id="TIGR00048">
    <property type="entry name" value="rRNA_mod_RlmN"/>
    <property type="match status" value="1"/>
</dbReference>
<dbReference type="PANTHER" id="PTHR30544">
    <property type="entry name" value="23S RRNA METHYLTRANSFERASE"/>
    <property type="match status" value="1"/>
</dbReference>
<dbReference type="PANTHER" id="PTHR30544:SF5">
    <property type="entry name" value="RADICAL SAM CORE DOMAIN-CONTAINING PROTEIN"/>
    <property type="match status" value="1"/>
</dbReference>
<dbReference type="Pfam" id="PF04055">
    <property type="entry name" value="Radical_SAM"/>
    <property type="match status" value="1"/>
</dbReference>
<dbReference type="Pfam" id="PF21016">
    <property type="entry name" value="RlmN_N"/>
    <property type="match status" value="1"/>
</dbReference>
<dbReference type="PIRSF" id="PIRSF006004">
    <property type="entry name" value="CHP00048"/>
    <property type="match status" value="1"/>
</dbReference>
<dbReference type="SFLD" id="SFLDF00275">
    <property type="entry name" value="adenosine_C2_methyltransferase"/>
    <property type="match status" value="1"/>
</dbReference>
<dbReference type="SFLD" id="SFLDG01062">
    <property type="entry name" value="methyltransferase_(Class_A)"/>
    <property type="match status" value="1"/>
</dbReference>
<dbReference type="SUPFAM" id="SSF102114">
    <property type="entry name" value="Radical SAM enzymes"/>
    <property type="match status" value="1"/>
</dbReference>
<dbReference type="PROSITE" id="PS51918">
    <property type="entry name" value="RADICAL_SAM"/>
    <property type="match status" value="1"/>
</dbReference>
<proteinExistence type="inferred from homology"/>
<comment type="function">
    <text evidence="1">Specifically methylates position 2 of adenine 2503 in 23S rRNA and position 2 of adenine 37 in tRNAs. m2A2503 modification seems to play a crucial role in the proofreading step occurring at the peptidyl transferase center and thus would serve to optimize ribosomal fidelity.</text>
</comment>
<comment type="catalytic activity">
    <reaction evidence="1">
        <text>adenosine(2503) in 23S rRNA + 2 reduced [2Fe-2S]-[ferredoxin] + 2 S-adenosyl-L-methionine = 2-methyladenosine(2503) in 23S rRNA + 5'-deoxyadenosine + L-methionine + 2 oxidized [2Fe-2S]-[ferredoxin] + S-adenosyl-L-homocysteine</text>
        <dbReference type="Rhea" id="RHEA:42916"/>
        <dbReference type="Rhea" id="RHEA-COMP:10000"/>
        <dbReference type="Rhea" id="RHEA-COMP:10001"/>
        <dbReference type="Rhea" id="RHEA-COMP:10152"/>
        <dbReference type="Rhea" id="RHEA-COMP:10282"/>
        <dbReference type="ChEBI" id="CHEBI:17319"/>
        <dbReference type="ChEBI" id="CHEBI:33737"/>
        <dbReference type="ChEBI" id="CHEBI:33738"/>
        <dbReference type="ChEBI" id="CHEBI:57844"/>
        <dbReference type="ChEBI" id="CHEBI:57856"/>
        <dbReference type="ChEBI" id="CHEBI:59789"/>
        <dbReference type="ChEBI" id="CHEBI:74411"/>
        <dbReference type="ChEBI" id="CHEBI:74497"/>
        <dbReference type="EC" id="2.1.1.192"/>
    </reaction>
</comment>
<comment type="catalytic activity">
    <reaction evidence="1">
        <text>adenosine(37) in tRNA + 2 reduced [2Fe-2S]-[ferredoxin] + 2 S-adenosyl-L-methionine = 2-methyladenosine(37) in tRNA + 5'-deoxyadenosine + L-methionine + 2 oxidized [2Fe-2S]-[ferredoxin] + S-adenosyl-L-homocysteine</text>
        <dbReference type="Rhea" id="RHEA:43332"/>
        <dbReference type="Rhea" id="RHEA-COMP:10000"/>
        <dbReference type="Rhea" id="RHEA-COMP:10001"/>
        <dbReference type="Rhea" id="RHEA-COMP:10162"/>
        <dbReference type="Rhea" id="RHEA-COMP:10485"/>
        <dbReference type="ChEBI" id="CHEBI:17319"/>
        <dbReference type="ChEBI" id="CHEBI:33737"/>
        <dbReference type="ChEBI" id="CHEBI:33738"/>
        <dbReference type="ChEBI" id="CHEBI:57844"/>
        <dbReference type="ChEBI" id="CHEBI:57856"/>
        <dbReference type="ChEBI" id="CHEBI:59789"/>
        <dbReference type="ChEBI" id="CHEBI:74411"/>
        <dbReference type="ChEBI" id="CHEBI:74497"/>
        <dbReference type="EC" id="2.1.1.192"/>
    </reaction>
</comment>
<comment type="cofactor">
    <cofactor evidence="1">
        <name>[4Fe-4S] cluster</name>
        <dbReference type="ChEBI" id="CHEBI:49883"/>
    </cofactor>
    <text evidence="1">Binds 1 [4Fe-4S] cluster. The cluster is coordinated with 3 cysteines and an exchangeable S-adenosyl-L-methionine.</text>
</comment>
<comment type="subcellular location">
    <subcellularLocation>
        <location evidence="1">Cytoplasm</location>
    </subcellularLocation>
</comment>
<comment type="miscellaneous">
    <text evidence="1">Reaction proceeds by a ping-pong mechanism involving intermediate methylation of a conserved cysteine residue.</text>
</comment>
<comment type="similarity">
    <text evidence="1">Belongs to the radical SAM superfamily. RlmN family.</text>
</comment>